<proteinExistence type="evidence at protein level"/>
<dbReference type="EC" id="3.4.21.-"/>
<dbReference type="EMBL" id="Z36903">
    <property type="protein sequence ID" value="CAA85372.1"/>
    <property type="molecule type" value="Genomic_RNA"/>
</dbReference>
<dbReference type="EMBL" id="Z48630">
    <property type="protein sequence ID" value="CAA88561.1"/>
    <property type="molecule type" value="Genomic_RNA"/>
</dbReference>
<dbReference type="EMBL" id="DQ680848">
    <property type="protein sequence ID" value="ABG73618.1"/>
    <property type="molecule type" value="Genomic_RNA"/>
</dbReference>
<dbReference type="RefSeq" id="NP_941376.1">
    <property type="nucleotide sequence ID" value="NC_002618.2"/>
</dbReference>
<dbReference type="SMR" id="Q89504"/>
<dbReference type="MEROPS" id="S39.001"/>
<dbReference type="iPTMnet" id="Q89504"/>
<dbReference type="KEGG" id="vg:2654592"/>
<dbReference type="Proteomes" id="UP000001461">
    <property type="component" value="Segment"/>
</dbReference>
<dbReference type="Proteomes" id="UP000008994">
    <property type="component" value="Segment"/>
</dbReference>
<dbReference type="GO" id="GO:0033644">
    <property type="term" value="C:host cell membrane"/>
    <property type="evidence" value="ECO:0007669"/>
    <property type="project" value="UniProtKB-SubCell"/>
</dbReference>
<dbReference type="GO" id="GO:0016020">
    <property type="term" value="C:membrane"/>
    <property type="evidence" value="ECO:0007669"/>
    <property type="project" value="UniProtKB-KW"/>
</dbReference>
<dbReference type="GO" id="GO:0004252">
    <property type="term" value="F:serine-type endopeptidase activity"/>
    <property type="evidence" value="ECO:0007669"/>
    <property type="project" value="InterPro"/>
</dbReference>
<dbReference type="GO" id="GO:0006508">
    <property type="term" value="P:proteolysis"/>
    <property type="evidence" value="ECO:0007669"/>
    <property type="project" value="UniProtKB-KW"/>
</dbReference>
<dbReference type="GO" id="GO:0075523">
    <property type="term" value="P:viral translational frameshifting"/>
    <property type="evidence" value="ECO:0007669"/>
    <property type="project" value="UniProtKB-KW"/>
</dbReference>
<dbReference type="Gene3D" id="2.40.10.10">
    <property type="entry name" value="Trypsin-like serine proteases"/>
    <property type="match status" value="2"/>
</dbReference>
<dbReference type="InterPro" id="IPR009003">
    <property type="entry name" value="Peptidase_S1_PA"/>
</dbReference>
<dbReference type="InterPro" id="IPR043504">
    <property type="entry name" value="Peptidase_S1_PA_chymotrypsin"/>
</dbReference>
<dbReference type="InterPro" id="IPR000382">
    <property type="entry name" value="Peptidase_S39B_luteovirus"/>
</dbReference>
<dbReference type="Pfam" id="PF02122">
    <property type="entry name" value="Peptidase_S39"/>
    <property type="match status" value="1"/>
</dbReference>
<dbReference type="SUPFAM" id="SSF50494">
    <property type="entry name" value="Trypsin-like serine proteases"/>
    <property type="match status" value="1"/>
</dbReference>
<dbReference type="PROSITE" id="PS51868">
    <property type="entry name" value="PEPTIDASE_S39"/>
    <property type="match status" value="1"/>
</dbReference>
<comment type="function">
    <molecule>Serine protease</molecule>
    <text>Responsible for cleavages of polyprotein P2A and replicase polyprotein P2AB.</text>
</comment>
<comment type="function">
    <molecule>VPg</molecule>
    <text>Covalently attached to the 5' extremity of the genomic and subgenomic RNAs. It may serve as a primer for the replicase.</text>
</comment>
<comment type="subcellular location">
    <molecule>Polyprotein P2A</molecule>
    <subcellularLocation>
        <location evidence="6">Host membrane</location>
        <topology evidence="6">Multi-pass membrane protein</topology>
    </subcellularLocation>
</comment>
<comment type="subcellular location">
    <molecule>N-terminal protein</molecule>
    <subcellularLocation>
        <location evidence="6">Host membrane</location>
        <topology evidence="6">Multi-pass membrane protein</topology>
    </subcellularLocation>
</comment>
<comment type="alternative products">
    <event type="ribosomal frameshifting"/>
    <isoform>
        <id>Q89504-1</id>
        <name>Polyprotein P2A</name>
        <sequence type="displayed"/>
    </isoform>
    <isoform>
        <id>Q0PW25-1</id>
        <name>Replicase polyprotein P2AB</name>
        <sequence type="external"/>
    </isoform>
</comment>
<comment type="miscellaneous">
    <molecule>Isoform Polyprotein P2A</molecule>
    <text>Produced by conventional translation.</text>
</comment>
<evidence type="ECO:0000250" key="1"/>
<evidence type="ECO:0000255" key="2"/>
<evidence type="ECO:0000255" key="3">
    <source>
        <dbReference type="PROSITE-ProRule" id="PRU01216"/>
    </source>
</evidence>
<evidence type="ECO:0000256" key="4">
    <source>
        <dbReference type="SAM" id="MobiDB-lite"/>
    </source>
</evidence>
<evidence type="ECO:0000269" key="5">
    <source>
    </source>
</evidence>
<evidence type="ECO:0000305" key="6"/>
<organism>
    <name type="scientific">Cocksfoot mottle virus (isolate Dactylis glomerata/Norway/CfMV-NO/1995)</name>
    <name type="common">CfMV</name>
    <dbReference type="NCBI Taxonomy" id="1005059"/>
    <lineage>
        <taxon>Viruses</taxon>
        <taxon>Riboviria</taxon>
        <taxon>Orthornavirae</taxon>
        <taxon>Pisuviricota</taxon>
        <taxon>Pisoniviricetes</taxon>
        <taxon>Sobelivirales</taxon>
        <taxon>Solemoviridae</taxon>
        <taxon>Sobemovirus</taxon>
        <taxon>Cocksfoot mottle virus</taxon>
    </lineage>
</organism>
<accession>Q89504</accession>
<accession>Q0PW24</accession>
<accession>Q76PL5</accession>
<organismHost>
    <name type="scientific">Dactylis glomerata</name>
    <name type="common">Orchard grass</name>
    <name type="synonym">Cock's-foot grass</name>
    <dbReference type="NCBI Taxonomy" id="4509"/>
</organismHost>
<organismHost>
    <name type="scientific">Triticum aestivum</name>
    <name type="common">Wheat</name>
    <dbReference type="NCBI Taxonomy" id="4565"/>
</organismHost>
<feature type="chain" id="PRO_0000409851" description="Polyprotein P2A">
    <location>
        <begin position="1"/>
        <end position="568"/>
    </location>
</feature>
<feature type="chain" id="PRO_0000409852" description="N-terminal protein" evidence="2">
    <location>
        <begin position="1"/>
        <end position="130"/>
    </location>
</feature>
<feature type="chain" id="PRO_0000409853" description="Serine protease" evidence="2">
    <location>
        <begin position="131"/>
        <end position="319"/>
    </location>
</feature>
<feature type="chain" id="PRO_0000409854" description="VPg" evidence="2">
    <location>
        <begin position="320"/>
        <end position="397"/>
    </location>
</feature>
<feature type="chain" id="PRO_0000409855" description="Putative protein p10" evidence="1">
    <location>
        <begin position="398"/>
        <end position="499"/>
    </location>
</feature>
<feature type="chain" id="PRO_0000409856" description="Putative protein p8" evidence="1">
    <location>
        <begin position="500"/>
        <end position="568"/>
    </location>
</feature>
<feature type="transmembrane region" description="Helical" evidence="2">
    <location>
        <begin position="10"/>
        <end position="30"/>
    </location>
</feature>
<feature type="transmembrane region" description="Helical" evidence="2">
    <location>
        <begin position="41"/>
        <end position="61"/>
    </location>
</feature>
<feature type="domain" description="Peptidase S39" evidence="3">
    <location>
        <begin position="129"/>
        <end position="326"/>
    </location>
</feature>
<feature type="region of interest" description="Disordered" evidence="4">
    <location>
        <begin position="403"/>
        <end position="435"/>
    </location>
</feature>
<feature type="region of interest" description="Disordered" evidence="4">
    <location>
        <begin position="469"/>
        <end position="568"/>
    </location>
</feature>
<feature type="compositionally biased region" description="Polar residues" evidence="4">
    <location>
        <begin position="419"/>
        <end position="435"/>
    </location>
</feature>
<feature type="compositionally biased region" description="Polar residues" evidence="4">
    <location>
        <begin position="469"/>
        <end position="478"/>
    </location>
</feature>
<feature type="compositionally biased region" description="Basic and acidic residues" evidence="4">
    <location>
        <begin position="481"/>
        <end position="502"/>
    </location>
</feature>
<feature type="compositionally biased region" description="Polar residues" evidence="4">
    <location>
        <begin position="507"/>
        <end position="516"/>
    </location>
</feature>
<feature type="compositionally biased region" description="Basic residues" evidence="4">
    <location>
        <begin position="539"/>
        <end position="549"/>
    </location>
</feature>
<feature type="compositionally biased region" description="Polar residues" evidence="4">
    <location>
        <begin position="554"/>
        <end position="568"/>
    </location>
</feature>
<feature type="active site" description="For protease activity" evidence="3">
    <location>
        <position position="176"/>
    </location>
</feature>
<feature type="active site" description="For protease activity" evidence="3">
    <location>
        <position position="209"/>
    </location>
</feature>
<feature type="active site" description="For protease activity" evidence="3">
    <location>
        <position position="276"/>
    </location>
</feature>
<feature type="site" description="Cleavage; by viral serine protease" evidence="2">
    <location>
        <begin position="130"/>
        <end position="131"/>
    </location>
</feature>
<feature type="site" description="Cleavage; by viral serine protease" evidence="2">
    <location>
        <begin position="319"/>
        <end position="320"/>
    </location>
</feature>
<feature type="site" description="Interacts with viral RNA (covalent)">
    <location>
        <position position="324"/>
    </location>
</feature>
<feature type="site" description="Cleavage; by viral serine protease" evidence="2">
    <location>
        <begin position="397"/>
        <end position="398"/>
    </location>
</feature>
<feature type="site" description="Cleavage; by viral serine protease" evidence="2">
    <location>
        <begin position="499"/>
        <end position="500"/>
    </location>
</feature>
<feature type="modified residue" description="Phosphothreonine; by host" evidence="5">
    <location>
        <position position="339"/>
    </location>
</feature>
<feature type="modified residue" description="Phosphoserine; by host" evidence="5">
    <location>
        <position position="390"/>
    </location>
</feature>
<feature type="sequence conflict" description="In Ref. 1; CAA85372." evidence="6" ref="1">
    <original>I</original>
    <variation>V</variation>
    <location>
        <position position="27"/>
    </location>
</feature>
<feature type="sequence conflict" description="In Ref. 1; CAA85372." evidence="6" ref="1">
    <original>CE</original>
    <variation>WQ</variation>
    <location>
        <begin position="61"/>
        <end position="62"/>
    </location>
</feature>
<feature type="sequence conflict" description="In Ref. 1; CAA85372." evidence="6" ref="1">
    <original>T</original>
    <variation>A</variation>
    <location>
        <position position="75"/>
    </location>
</feature>
<feature type="sequence conflict" description="In Ref. 1; CAA85372." evidence="6" ref="1">
    <original>K</original>
    <variation>R</variation>
    <location>
        <position position="217"/>
    </location>
</feature>
<feature type="sequence conflict" description="In Ref. 1; CAA85372." evidence="6" ref="1">
    <original>L</original>
    <variation>P</variation>
    <location>
        <position position="477"/>
    </location>
</feature>
<feature type="sequence conflict" description="In Ref. 1; CAA85372." evidence="6" ref="1">
    <original>R</original>
    <variation>Q</variation>
    <location>
        <position position="483"/>
    </location>
</feature>
<feature type="sequence conflict" description="In Ref. 1; CAA85372." evidence="6" ref="1">
    <original>E</original>
    <variation>A</variation>
    <location>
        <position position="495"/>
    </location>
</feature>
<feature type="sequence conflict" description="In Ref. 1; CAA85372." evidence="6" ref="1">
    <original>K</original>
    <variation>R</variation>
    <location>
        <position position="498"/>
    </location>
</feature>
<feature type="sequence conflict" description="In Ref. 1; CAA85372." evidence="6" ref="1">
    <original>V</original>
    <variation>A</variation>
    <location>
        <position position="525"/>
    </location>
</feature>
<feature type="sequence conflict" description="In Ref. 1; CAA85372." evidence="6" ref="1">
    <original>V</original>
    <variation>A</variation>
    <location>
        <position position="533"/>
    </location>
</feature>
<feature type="sequence conflict" description="In Ref. 1; CAA85372." evidence="6" ref="1">
    <original>R</original>
    <variation>K</variation>
    <location>
        <position position="552"/>
    </location>
</feature>
<protein>
    <recommendedName>
        <fullName>Polyprotein P2A</fullName>
    </recommendedName>
    <component>
        <recommendedName>
            <fullName>N-terminal protein</fullName>
        </recommendedName>
    </component>
    <component>
        <recommendedName>
            <fullName>Serine protease</fullName>
            <ecNumber>3.4.21.-</ecNumber>
        </recommendedName>
    </component>
    <component>
        <recommendedName>
            <fullName>VPg</fullName>
        </recommendedName>
    </component>
    <component>
        <recommendedName>
            <fullName>Putative protein p10</fullName>
        </recommendedName>
    </component>
    <component>
        <recommendedName>
            <fullName>Putative protein p8</fullName>
        </recommendedName>
    </component>
</protein>
<sequence>MGCSVVGNCKSVMLMSRMSWSKLALLISVAMAAAMTDSPPTLICMGILVSVVLNWIVCAVCEEASELILGVSLETTRPSPARVIGEPVFDPRYGYVAPAIYDGKSFDVILPISALSSASTRKETVEMAVENSRLQPLESSQTPKSLVALYSQDLLSGWGSRIKGPDGQEYLLTALHVWETNISHLCKDGKKVPISGCPIVASSADSDLDFVLVSVPKNAWSVLGVGVARLELLKRRTVVTVYGGLDSKTTYCATGVAELENPFRIVTKVTTTGGWSGSPLYHKDAIVGLHLGARPSAGVNRACNVAMAFRVVRKFVTVENSELYPDQSSGPARELDAETYTERLEQGIAFTEYNISGITVKTSDREWTTAEALRVARYKPLGGGKAWGDSDDEDTQETAIRPLNYQRAGSLRGSPPLANLSSTRATSGVTKESSIPTACLSDPLESRVAGLEKLCAERFTEMFELLRQSSQNSKSSLGQAADRKQKSDRSSSKPEGLKESKRPPICNWQSLTSKPSTRGPDPAPVSAESPGVVKTSSQKSKRSRTRGKSTSRQVPASPSPKSGSATSK</sequence>
<keyword id="KW-0191">Covalent protein-RNA linkage</keyword>
<keyword id="KW-0903">Direct protein sequencing</keyword>
<keyword id="KW-1043">Host membrane</keyword>
<keyword id="KW-0378">Hydrolase</keyword>
<keyword id="KW-0472">Membrane</keyword>
<keyword id="KW-0597">Phosphoprotein</keyword>
<keyword id="KW-0645">Protease</keyword>
<keyword id="KW-1185">Reference proteome</keyword>
<keyword id="KW-0688">Ribosomal frameshifting</keyword>
<keyword id="KW-0720">Serine protease</keyword>
<keyword id="KW-0812">Transmembrane</keyword>
<keyword id="KW-1133">Transmembrane helix</keyword>
<name>P2A_CFMVN</name>
<reference key="1">
    <citation type="journal article" date="1995" name="J. Gen. Virol.">
        <title>Characterization of cocksfoot mottle sobemovirus genomic RNA and sequence comparison with related viruses.</title>
        <authorList>
            <person name="Maekinen K."/>
            <person name="Tamm T."/>
            <person name="Naess V."/>
            <person name="Truve E."/>
            <person name="Puurand U."/>
            <person name="Munthe T."/>
            <person name="Saarma M."/>
        </authorList>
    </citation>
    <scope>NUCLEOTIDE SEQUENCE [GENOMIC RNA]</scope>
</reference>
<reference key="2">
    <citation type="journal article" date="2006" name="Virus Genes">
        <title>P1 protein of Cocksfoot mottle virus is indispensable for the systemic spread of the virus.</title>
        <authorList>
            <person name="Meier M."/>
            <person name="Paves H."/>
            <person name="Olspert A."/>
            <person name="Tamm T."/>
            <person name="Truve E."/>
        </authorList>
    </citation>
    <scope>NUCLEOTIDE SEQUENCE [GENOMIC RNA]</scope>
</reference>
<reference key="3">
    <citation type="journal article" date="2000" name="J. Gen. Virol.">
        <title>Characterization of VPg and the polyprotein processing of cocksfoot mottle virus (genus Sobemovirus).</title>
        <authorList>
            <person name="Maekinen K."/>
            <person name="Maekelaeinen K."/>
            <person name="Arshava N."/>
            <person name="Tamm T."/>
            <person name="Merits A."/>
            <person name="Truve E."/>
            <person name="Zavriev S."/>
            <person name="Saarma M."/>
        </authorList>
    </citation>
    <scope>PROTEIN SEQUENCE OF 320-336</scope>
    <scope>PROTEOLYTIC PROCESSING OF POLYPROTEIN</scope>
    <scope>CHARACTERIZATION OF VPG</scope>
</reference>
<reference key="4">
    <citation type="journal article" date="2011" name="J. Gen. Virol.">
        <title>Protein-RNA linkage and post-translational modifications of two sobemovirus VPgs.</title>
        <authorList>
            <person name="Olspert A."/>
            <person name="Peil L."/>
            <person name="Hebrard E."/>
            <person name="Fargette D."/>
            <person name="Truve E."/>
        </authorList>
    </citation>
    <scope>PROTEOLYTIC PROCESSING OF POLYPROTEIN</scope>
    <scope>PHOSPHORYLATION AT THR-339 AND SER-390</scope>
</reference>
<gene>
    <name type="ORF">ORF2A</name>
</gene>